<proteinExistence type="inferred from homology"/>
<organism>
    <name type="scientific">Pseudomonas aeruginosa (strain UCBPP-PA14)</name>
    <dbReference type="NCBI Taxonomy" id="208963"/>
    <lineage>
        <taxon>Bacteria</taxon>
        <taxon>Pseudomonadati</taxon>
        <taxon>Pseudomonadota</taxon>
        <taxon>Gammaproteobacteria</taxon>
        <taxon>Pseudomonadales</taxon>
        <taxon>Pseudomonadaceae</taxon>
        <taxon>Pseudomonas</taxon>
    </lineage>
</organism>
<name>AGUA_PSEAB</name>
<protein>
    <recommendedName>
        <fullName evidence="1">Agmatine deiminase</fullName>
        <ecNumber evidence="1">3.5.3.12</ecNumber>
    </recommendedName>
    <alternativeName>
        <fullName evidence="1">Agmatine iminohydrolase</fullName>
    </alternativeName>
</protein>
<comment type="function">
    <text evidence="1">Mediates the hydrolysis of agmatine into N-carbamoylputrescine in the arginine decarboxylase (ADC) pathway of putrescine biosynthesis, a basic polyamine.</text>
</comment>
<comment type="catalytic activity">
    <reaction evidence="1">
        <text>agmatine + H2O = N-carbamoylputrescine + NH4(+)</text>
        <dbReference type="Rhea" id="RHEA:18037"/>
        <dbReference type="ChEBI" id="CHEBI:15377"/>
        <dbReference type="ChEBI" id="CHEBI:28938"/>
        <dbReference type="ChEBI" id="CHEBI:58145"/>
        <dbReference type="ChEBI" id="CHEBI:58318"/>
        <dbReference type="EC" id="3.5.3.12"/>
    </reaction>
</comment>
<comment type="pathway">
    <text evidence="1">Amine and polyamine biosynthesis; putrescine biosynthesis via agmatine pathway; N-carbamoylputrescine from agmatine: step 1/1.</text>
</comment>
<comment type="subunit">
    <text evidence="1">Homodimer.</text>
</comment>
<comment type="similarity">
    <text evidence="1">Belongs to the agmatine deiminase family.</text>
</comment>
<feature type="chain" id="PRO_1000070561" description="Agmatine deiminase">
    <location>
        <begin position="1"/>
        <end position="368"/>
    </location>
</feature>
<feature type="active site" description="Amidino-cysteine intermediate" evidence="1">
    <location>
        <position position="357"/>
    </location>
</feature>
<evidence type="ECO:0000255" key="1">
    <source>
        <dbReference type="HAMAP-Rule" id="MF_01841"/>
    </source>
</evidence>
<reference key="1">
    <citation type="journal article" date="2006" name="Genome Biol.">
        <title>Genomic analysis reveals that Pseudomonas aeruginosa virulence is combinatorial.</title>
        <authorList>
            <person name="Lee D.G."/>
            <person name="Urbach J.M."/>
            <person name="Wu G."/>
            <person name="Liberati N.T."/>
            <person name="Feinbaum R.L."/>
            <person name="Miyata S."/>
            <person name="Diggins L.T."/>
            <person name="He J."/>
            <person name="Saucier M."/>
            <person name="Deziel E."/>
            <person name="Friedman L."/>
            <person name="Li L."/>
            <person name="Grills G."/>
            <person name="Montgomery K."/>
            <person name="Kucherlapati R."/>
            <person name="Rahme L.G."/>
            <person name="Ausubel F.M."/>
        </authorList>
    </citation>
    <scope>NUCLEOTIDE SEQUENCE [LARGE SCALE GENOMIC DNA]</scope>
    <source>
        <strain>UCBPP-PA14</strain>
    </source>
</reference>
<accession>Q02UC5</accession>
<sequence>MSNPTSTPRADGFRMPAEWEPHEQTWMVWPERPDNWRNGGKPAQAAFAAVAKAIARFEPVTVCASAGQYENARARLDDGNIRVVEISSDDAWVRDTGPTFVIDDKGDVRGVDWGFNAWGGFEGGLYFPWQRDDQVARKILEIERRARYRTDDFVLEGGSIHVDGEGTLITTEECLLNHNRNPHLSQVEIERTLRDYLAVDSIIWLPNGLYNDETDGHVDNFCCYVRPGEVLLAWTDDQDDPNYLRCQAALRVLEESRDAKGRKLVVHKMPIPGPLYATQEECDGVDIVEGSQPRDPSIRLAGSYVNFLIVNGGIVAPSFDDPKDAEARAILQRVFPEHEVVMVPGREILLGGGNIHCITQQQPAPRKA</sequence>
<keyword id="KW-0378">Hydrolase</keyword>
<keyword id="KW-0620">Polyamine biosynthesis</keyword>
<dbReference type="EC" id="3.5.3.12" evidence="1"/>
<dbReference type="EMBL" id="CP000438">
    <property type="protein sequence ID" value="ABJ15255.1"/>
    <property type="molecule type" value="Genomic_DNA"/>
</dbReference>
<dbReference type="RefSeq" id="WP_003121701.1">
    <property type="nucleotide sequence ID" value="NZ_CP034244.1"/>
</dbReference>
<dbReference type="SMR" id="Q02UC5"/>
<dbReference type="KEGG" id="pau:PA14_03810"/>
<dbReference type="PseudoCAP" id="PA14_03810"/>
<dbReference type="HOGENOM" id="CLU_037682_1_0_6"/>
<dbReference type="BioCyc" id="PAER208963:G1G74-320-MONOMER"/>
<dbReference type="UniPathway" id="UPA00534">
    <property type="reaction ID" value="UER00285"/>
</dbReference>
<dbReference type="Proteomes" id="UP000000653">
    <property type="component" value="Chromosome"/>
</dbReference>
<dbReference type="GO" id="GO:0047632">
    <property type="term" value="F:agmatine deiminase activity"/>
    <property type="evidence" value="ECO:0007669"/>
    <property type="project" value="UniProtKB-UniRule"/>
</dbReference>
<dbReference type="GO" id="GO:0004668">
    <property type="term" value="F:protein-arginine deiminase activity"/>
    <property type="evidence" value="ECO:0007669"/>
    <property type="project" value="InterPro"/>
</dbReference>
<dbReference type="GO" id="GO:0033388">
    <property type="term" value="P:putrescine biosynthetic process from arginine"/>
    <property type="evidence" value="ECO:0007669"/>
    <property type="project" value="UniProtKB-UniRule"/>
</dbReference>
<dbReference type="FunFam" id="3.75.10.10:FF:000012">
    <property type="entry name" value="Agmatine deiminase"/>
    <property type="match status" value="1"/>
</dbReference>
<dbReference type="Gene3D" id="3.75.10.10">
    <property type="entry name" value="L-arginine/glycine Amidinotransferase, Chain A"/>
    <property type="match status" value="1"/>
</dbReference>
<dbReference type="HAMAP" id="MF_01841">
    <property type="entry name" value="Agmatine_deimin"/>
    <property type="match status" value="1"/>
</dbReference>
<dbReference type="InterPro" id="IPR017754">
    <property type="entry name" value="Agmatine_deiminase"/>
</dbReference>
<dbReference type="InterPro" id="IPR007466">
    <property type="entry name" value="Peptidyl-Arg-deiminase_porph"/>
</dbReference>
<dbReference type="NCBIfam" id="TIGR03380">
    <property type="entry name" value="agmatine_aguA"/>
    <property type="match status" value="1"/>
</dbReference>
<dbReference type="NCBIfam" id="NF010070">
    <property type="entry name" value="PRK13551.1"/>
    <property type="match status" value="1"/>
</dbReference>
<dbReference type="PANTHER" id="PTHR31377">
    <property type="entry name" value="AGMATINE DEIMINASE-RELATED"/>
    <property type="match status" value="1"/>
</dbReference>
<dbReference type="PANTHER" id="PTHR31377:SF0">
    <property type="entry name" value="AGMATINE DEIMINASE-RELATED"/>
    <property type="match status" value="1"/>
</dbReference>
<dbReference type="Pfam" id="PF04371">
    <property type="entry name" value="PAD_porph"/>
    <property type="match status" value="1"/>
</dbReference>
<dbReference type="SUPFAM" id="SSF55909">
    <property type="entry name" value="Pentein"/>
    <property type="match status" value="1"/>
</dbReference>
<gene>
    <name evidence="1" type="primary">aguA</name>
    <name type="ordered locus">PA14_03810</name>
</gene>